<protein>
    <recommendedName>
        <fullName evidence="1">Der GTPase-activating protein YihI</fullName>
    </recommendedName>
</protein>
<name>YIHI_YERPS</name>
<accession>Q66GG2</accession>
<reference key="1">
    <citation type="journal article" date="2004" name="Proc. Natl. Acad. Sci. U.S.A.">
        <title>Insights into the evolution of Yersinia pestis through whole-genome comparison with Yersinia pseudotuberculosis.</title>
        <authorList>
            <person name="Chain P.S.G."/>
            <person name="Carniel E."/>
            <person name="Larimer F.W."/>
            <person name="Lamerdin J."/>
            <person name="Stoutland P.O."/>
            <person name="Regala W.M."/>
            <person name="Georgescu A.M."/>
            <person name="Vergez L.M."/>
            <person name="Land M.L."/>
            <person name="Motin V.L."/>
            <person name="Brubaker R.R."/>
            <person name="Fowler J."/>
            <person name="Hinnebusch J."/>
            <person name="Marceau M."/>
            <person name="Medigue C."/>
            <person name="Simonet M."/>
            <person name="Chenal-Francisque V."/>
            <person name="Souza B."/>
            <person name="Dacheux D."/>
            <person name="Elliott J.M."/>
            <person name="Derbise A."/>
            <person name="Hauser L.J."/>
            <person name="Garcia E."/>
        </authorList>
    </citation>
    <scope>NUCLEOTIDE SEQUENCE [LARGE SCALE GENOMIC DNA]</scope>
    <source>
        <strain>IP32953</strain>
    </source>
</reference>
<keyword id="KW-0343">GTPase activation</keyword>
<keyword id="KW-0690">Ribosome biogenesis</keyword>
<organism>
    <name type="scientific">Yersinia pseudotuberculosis serotype I (strain IP32953)</name>
    <dbReference type="NCBI Taxonomy" id="273123"/>
    <lineage>
        <taxon>Bacteria</taxon>
        <taxon>Pseudomonadati</taxon>
        <taxon>Pseudomonadota</taxon>
        <taxon>Gammaproteobacteria</taxon>
        <taxon>Enterobacterales</taxon>
        <taxon>Yersiniaceae</taxon>
        <taxon>Yersinia</taxon>
    </lineage>
</organism>
<evidence type="ECO:0000255" key="1">
    <source>
        <dbReference type="HAMAP-Rule" id="MF_01058"/>
    </source>
</evidence>
<evidence type="ECO:0000256" key="2">
    <source>
        <dbReference type="SAM" id="MobiDB-lite"/>
    </source>
</evidence>
<feature type="chain" id="PRO_0000209600" description="Der GTPase-activating protein YihI">
    <location>
        <begin position="1"/>
        <end position="188"/>
    </location>
</feature>
<feature type="region of interest" description="Disordered" evidence="2">
    <location>
        <begin position="1"/>
        <end position="80"/>
    </location>
</feature>
<feature type="region of interest" description="Disordered" evidence="2">
    <location>
        <begin position="162"/>
        <end position="188"/>
    </location>
</feature>
<feature type="compositionally biased region" description="Basic and acidic residues" evidence="2">
    <location>
        <begin position="27"/>
        <end position="37"/>
    </location>
</feature>
<feature type="compositionally biased region" description="Polar residues" evidence="2">
    <location>
        <begin position="47"/>
        <end position="57"/>
    </location>
</feature>
<gene>
    <name evidence="1" type="primary">yihI</name>
    <name type="ordered locus">YPTB0020</name>
</gene>
<dbReference type="EMBL" id="BX936398">
    <property type="protein sequence ID" value="CAH19260.1"/>
    <property type="molecule type" value="Genomic_DNA"/>
</dbReference>
<dbReference type="RefSeq" id="WP_002213158.1">
    <property type="nucleotide sequence ID" value="NZ_CP009712.1"/>
</dbReference>
<dbReference type="SMR" id="Q66GG2"/>
<dbReference type="GeneID" id="57974569"/>
<dbReference type="KEGG" id="ypo:BZ17_2575"/>
<dbReference type="KEGG" id="yps:YPTB0020"/>
<dbReference type="PATRIC" id="fig|273123.14.peg.2703"/>
<dbReference type="Proteomes" id="UP000001011">
    <property type="component" value="Chromosome"/>
</dbReference>
<dbReference type="GO" id="GO:0005096">
    <property type="term" value="F:GTPase activator activity"/>
    <property type="evidence" value="ECO:0007669"/>
    <property type="project" value="UniProtKB-KW"/>
</dbReference>
<dbReference type="GO" id="GO:0042254">
    <property type="term" value="P:ribosome biogenesis"/>
    <property type="evidence" value="ECO:0007669"/>
    <property type="project" value="UniProtKB-KW"/>
</dbReference>
<dbReference type="HAMAP" id="MF_01058">
    <property type="entry name" value="GAP_YihI"/>
    <property type="match status" value="1"/>
</dbReference>
<dbReference type="InterPro" id="IPR007336">
    <property type="entry name" value="YihI"/>
</dbReference>
<dbReference type="NCBIfam" id="NF003560">
    <property type="entry name" value="PRK05244.1-1"/>
    <property type="match status" value="1"/>
</dbReference>
<dbReference type="Pfam" id="PF04220">
    <property type="entry name" value="YihI"/>
    <property type="match status" value="1"/>
</dbReference>
<sequence>MKQPNKAPRANIAAPKGTATPKRRRKTRDELDAEARDRKRQKKHSGNRSGARTNVEGSNKKGHSQTQEKDPRVGSKVPVPLVIESQVKAKSMPKPVEKNVVKPRLTPEEELAKLENDERLDALLDRLDNDEVLNKEDQAYVDLTLDRIDALMEQLGIELGDDEDDVEREEKQEDILQLLKRGNPKDTF</sequence>
<proteinExistence type="inferred from homology"/>
<comment type="function">
    <text evidence="1">A GTPase-activating protein (GAP) that modifies Der/EngA GTPase function. May play a role in ribosome biogenesis.</text>
</comment>
<comment type="subunit">
    <text evidence="1">Interacts with Der.</text>
</comment>
<comment type="similarity">
    <text evidence="1">Belongs to the YihI family.</text>
</comment>